<gene>
    <name evidence="1" type="primary">nuoH</name>
    <name type="ordered locus">BOV_0804</name>
</gene>
<name>NUOH_BRUO2</name>
<evidence type="ECO:0000255" key="1">
    <source>
        <dbReference type="HAMAP-Rule" id="MF_01350"/>
    </source>
</evidence>
<comment type="function">
    <text evidence="1">NDH-1 shuttles electrons from NADH, via FMN and iron-sulfur (Fe-S) centers, to quinones in the respiratory chain. The immediate electron acceptor for the enzyme in this species is believed to be ubiquinone. Couples the redox reaction to proton translocation (for every two electrons transferred, four hydrogen ions are translocated across the cytoplasmic membrane), and thus conserves the redox energy in a proton gradient. This subunit may bind ubiquinone.</text>
</comment>
<comment type="catalytic activity">
    <reaction evidence="1">
        <text>a quinone + NADH + 5 H(+)(in) = a quinol + NAD(+) + 4 H(+)(out)</text>
        <dbReference type="Rhea" id="RHEA:57888"/>
        <dbReference type="ChEBI" id="CHEBI:15378"/>
        <dbReference type="ChEBI" id="CHEBI:24646"/>
        <dbReference type="ChEBI" id="CHEBI:57540"/>
        <dbReference type="ChEBI" id="CHEBI:57945"/>
        <dbReference type="ChEBI" id="CHEBI:132124"/>
    </reaction>
</comment>
<comment type="subunit">
    <text evidence="1">NDH-1 is composed of 14 different subunits. Subunits NuoA, H, J, K, L, M, N constitute the membrane sector of the complex.</text>
</comment>
<comment type="subcellular location">
    <subcellularLocation>
        <location evidence="1">Cell inner membrane</location>
        <topology evidence="1">Multi-pass membrane protein</topology>
    </subcellularLocation>
</comment>
<comment type="similarity">
    <text evidence="1">Belongs to the complex I subunit 1 family.</text>
</comment>
<keyword id="KW-0997">Cell inner membrane</keyword>
<keyword id="KW-1003">Cell membrane</keyword>
<keyword id="KW-0472">Membrane</keyword>
<keyword id="KW-0520">NAD</keyword>
<keyword id="KW-0874">Quinone</keyword>
<keyword id="KW-1278">Translocase</keyword>
<keyword id="KW-0812">Transmembrane</keyword>
<keyword id="KW-1133">Transmembrane helix</keyword>
<keyword id="KW-0830">Ubiquinone</keyword>
<dbReference type="EC" id="7.1.1.-" evidence="1"/>
<dbReference type="EMBL" id="CP000708">
    <property type="protein sequence ID" value="ABQ60239.1"/>
    <property type="molecule type" value="Genomic_DNA"/>
</dbReference>
<dbReference type="RefSeq" id="WP_006012204.1">
    <property type="nucleotide sequence ID" value="NC_009505.1"/>
</dbReference>
<dbReference type="SMR" id="A5VPZ0"/>
<dbReference type="GeneID" id="45124243"/>
<dbReference type="KEGG" id="bov:BOV_0804"/>
<dbReference type="HOGENOM" id="CLU_015134_0_1_5"/>
<dbReference type="PhylomeDB" id="A5VPZ0"/>
<dbReference type="Proteomes" id="UP000006383">
    <property type="component" value="Chromosome I"/>
</dbReference>
<dbReference type="GO" id="GO:0005886">
    <property type="term" value="C:plasma membrane"/>
    <property type="evidence" value="ECO:0007669"/>
    <property type="project" value="UniProtKB-SubCell"/>
</dbReference>
<dbReference type="GO" id="GO:0003954">
    <property type="term" value="F:NADH dehydrogenase activity"/>
    <property type="evidence" value="ECO:0007669"/>
    <property type="project" value="TreeGrafter"/>
</dbReference>
<dbReference type="GO" id="GO:0016655">
    <property type="term" value="F:oxidoreductase activity, acting on NAD(P)H, quinone or similar compound as acceptor"/>
    <property type="evidence" value="ECO:0007669"/>
    <property type="project" value="UniProtKB-UniRule"/>
</dbReference>
<dbReference type="GO" id="GO:0048038">
    <property type="term" value="F:quinone binding"/>
    <property type="evidence" value="ECO:0007669"/>
    <property type="project" value="UniProtKB-KW"/>
</dbReference>
<dbReference type="GO" id="GO:0009060">
    <property type="term" value="P:aerobic respiration"/>
    <property type="evidence" value="ECO:0007669"/>
    <property type="project" value="TreeGrafter"/>
</dbReference>
<dbReference type="HAMAP" id="MF_01350">
    <property type="entry name" value="NDH1_NuoH"/>
    <property type="match status" value="1"/>
</dbReference>
<dbReference type="InterPro" id="IPR001694">
    <property type="entry name" value="NADH_UbQ_OxRdtase_su1/FPO"/>
</dbReference>
<dbReference type="InterPro" id="IPR018086">
    <property type="entry name" value="NADH_UbQ_OxRdtase_su1_CS"/>
</dbReference>
<dbReference type="NCBIfam" id="NF004741">
    <property type="entry name" value="PRK06076.1-2"/>
    <property type="match status" value="1"/>
</dbReference>
<dbReference type="NCBIfam" id="NF004745">
    <property type="entry name" value="PRK06076.1-6"/>
    <property type="match status" value="1"/>
</dbReference>
<dbReference type="PANTHER" id="PTHR11432">
    <property type="entry name" value="NADH DEHYDROGENASE SUBUNIT 1"/>
    <property type="match status" value="1"/>
</dbReference>
<dbReference type="PANTHER" id="PTHR11432:SF3">
    <property type="entry name" value="NADH-UBIQUINONE OXIDOREDUCTASE CHAIN 1"/>
    <property type="match status" value="1"/>
</dbReference>
<dbReference type="Pfam" id="PF00146">
    <property type="entry name" value="NADHdh"/>
    <property type="match status" value="1"/>
</dbReference>
<dbReference type="PROSITE" id="PS00668">
    <property type="entry name" value="COMPLEX1_ND1_2"/>
    <property type="match status" value="1"/>
</dbReference>
<protein>
    <recommendedName>
        <fullName evidence="1">NADH-quinone oxidoreductase subunit H</fullName>
        <ecNumber evidence="1">7.1.1.-</ecNumber>
    </recommendedName>
    <alternativeName>
        <fullName evidence="1">NADH dehydrogenase I subunit H</fullName>
    </alternativeName>
    <alternativeName>
        <fullName evidence="1">NDH-1 subunit H</fullName>
    </alternativeName>
</protein>
<feature type="chain" id="PRO_1000067734" description="NADH-quinone oxidoreductase subunit H">
    <location>
        <begin position="1"/>
        <end position="347"/>
    </location>
</feature>
<feature type="transmembrane region" description="Helical" evidence="1">
    <location>
        <begin position="13"/>
        <end position="33"/>
    </location>
</feature>
<feature type="transmembrane region" description="Helical" evidence="1">
    <location>
        <begin position="50"/>
        <end position="70"/>
    </location>
</feature>
<feature type="transmembrane region" description="Helical" evidence="1">
    <location>
        <begin position="82"/>
        <end position="102"/>
    </location>
</feature>
<feature type="transmembrane region" description="Helical" evidence="1">
    <location>
        <begin position="115"/>
        <end position="135"/>
    </location>
</feature>
<feature type="transmembrane region" description="Helical" evidence="1">
    <location>
        <begin position="161"/>
        <end position="181"/>
    </location>
</feature>
<feature type="transmembrane region" description="Helical" evidence="1">
    <location>
        <begin position="198"/>
        <end position="218"/>
    </location>
</feature>
<feature type="transmembrane region" description="Helical" evidence="1">
    <location>
        <begin position="248"/>
        <end position="268"/>
    </location>
</feature>
<feature type="transmembrane region" description="Helical" evidence="1">
    <location>
        <begin position="286"/>
        <end position="306"/>
    </location>
</feature>
<feature type="transmembrane region" description="Helical" evidence="1">
    <location>
        <begin position="325"/>
        <end position="345"/>
    </location>
</feature>
<proteinExistence type="inferred from homology"/>
<organism>
    <name type="scientific">Brucella ovis (strain ATCC 25840 / 63/290 / NCTC 10512)</name>
    <dbReference type="NCBI Taxonomy" id="444178"/>
    <lineage>
        <taxon>Bacteria</taxon>
        <taxon>Pseudomonadati</taxon>
        <taxon>Pseudomonadota</taxon>
        <taxon>Alphaproteobacteria</taxon>
        <taxon>Hyphomicrobiales</taxon>
        <taxon>Brucellaceae</taxon>
        <taxon>Brucella/Ochrobactrum group</taxon>
        <taxon>Brucella</taxon>
    </lineage>
</organism>
<accession>A5VPZ0</accession>
<sequence length="347" mass="38458">MEGIFAAYVLPALIIALKSVVLLVVLLIVVAYLLYADRKIWAAVQLRRGPNVVGPWGLFQAFADLLKFVFKEPIIPSGANKGVFLLAPFISAVLAMATWAVIPVNESWAVANINVGILYIFAISSLEVYGVIMGGWASNSKYPFLGALRSAAQMVSYEVSIGFVIVTVLLTVGSLNLTDIVLSQNTGLGTMLGLPASFLDWNWLCLFPMFVVFFISALAETNRPPFDLVEAESELVAGHMIEYSSTPFLLFFLGEYVAITLMCALMTVLFLGGWLPPVDVWFLSWVPGIIWFMLKLCFCFFLFAMVKAFVPRYRYDQLMRLGWKVFLPISLFMVVATATFLKVFGLA</sequence>
<reference key="1">
    <citation type="journal article" date="2009" name="PLoS ONE">
        <title>Genome degradation in Brucella ovis corresponds with narrowing of its host range and tissue tropism.</title>
        <authorList>
            <person name="Tsolis R.M."/>
            <person name="Seshadri R."/>
            <person name="Santos R.L."/>
            <person name="Sangari F.J."/>
            <person name="Lobo J.M."/>
            <person name="de Jong M.F."/>
            <person name="Ren Q."/>
            <person name="Myers G."/>
            <person name="Brinkac L.M."/>
            <person name="Nelson W.C."/>
            <person name="Deboy R.T."/>
            <person name="Angiuoli S."/>
            <person name="Khouri H."/>
            <person name="Dimitrov G."/>
            <person name="Robinson J.R."/>
            <person name="Mulligan S."/>
            <person name="Walker R.L."/>
            <person name="Elzer P.E."/>
            <person name="Hassan K.A."/>
            <person name="Paulsen I.T."/>
        </authorList>
    </citation>
    <scope>NUCLEOTIDE SEQUENCE [LARGE SCALE GENOMIC DNA]</scope>
    <source>
        <strain>ATCC 25840 / 63/290 / NCTC 10512</strain>
    </source>
</reference>